<evidence type="ECO:0000255" key="1">
    <source>
        <dbReference type="HAMAP-Rule" id="MF_01363"/>
    </source>
</evidence>
<evidence type="ECO:0000305" key="2"/>
<proteinExistence type="inferred from homology"/>
<gene>
    <name evidence="1" type="primary">rplU</name>
    <name type="ordered locus">Vapar_4218</name>
</gene>
<keyword id="KW-0687">Ribonucleoprotein</keyword>
<keyword id="KW-0689">Ribosomal protein</keyword>
<keyword id="KW-0694">RNA-binding</keyword>
<keyword id="KW-0699">rRNA-binding</keyword>
<accession>C5CXX5</accession>
<name>RL21_VARPS</name>
<protein>
    <recommendedName>
        <fullName evidence="1">Large ribosomal subunit protein bL21</fullName>
    </recommendedName>
    <alternativeName>
        <fullName evidence="2">50S ribosomal protein L21</fullName>
    </alternativeName>
</protein>
<dbReference type="EMBL" id="CP001635">
    <property type="protein sequence ID" value="ACS20831.1"/>
    <property type="molecule type" value="Genomic_DNA"/>
</dbReference>
<dbReference type="SMR" id="C5CXX5"/>
<dbReference type="STRING" id="543728.Vapar_4218"/>
<dbReference type="KEGG" id="vap:Vapar_4218"/>
<dbReference type="eggNOG" id="COG0261">
    <property type="taxonomic scope" value="Bacteria"/>
</dbReference>
<dbReference type="HOGENOM" id="CLU_061463_3_2_4"/>
<dbReference type="OrthoDB" id="9813334at2"/>
<dbReference type="GO" id="GO:0005737">
    <property type="term" value="C:cytoplasm"/>
    <property type="evidence" value="ECO:0007669"/>
    <property type="project" value="UniProtKB-ARBA"/>
</dbReference>
<dbReference type="GO" id="GO:1990904">
    <property type="term" value="C:ribonucleoprotein complex"/>
    <property type="evidence" value="ECO:0007669"/>
    <property type="project" value="UniProtKB-KW"/>
</dbReference>
<dbReference type="GO" id="GO:0005840">
    <property type="term" value="C:ribosome"/>
    <property type="evidence" value="ECO:0007669"/>
    <property type="project" value="UniProtKB-KW"/>
</dbReference>
<dbReference type="GO" id="GO:0019843">
    <property type="term" value="F:rRNA binding"/>
    <property type="evidence" value="ECO:0007669"/>
    <property type="project" value="UniProtKB-UniRule"/>
</dbReference>
<dbReference type="GO" id="GO:0003735">
    <property type="term" value="F:structural constituent of ribosome"/>
    <property type="evidence" value="ECO:0007669"/>
    <property type="project" value="InterPro"/>
</dbReference>
<dbReference type="GO" id="GO:0006412">
    <property type="term" value="P:translation"/>
    <property type="evidence" value="ECO:0007669"/>
    <property type="project" value="UniProtKB-UniRule"/>
</dbReference>
<dbReference type="HAMAP" id="MF_01363">
    <property type="entry name" value="Ribosomal_bL21"/>
    <property type="match status" value="1"/>
</dbReference>
<dbReference type="InterPro" id="IPR028909">
    <property type="entry name" value="bL21-like"/>
</dbReference>
<dbReference type="InterPro" id="IPR036164">
    <property type="entry name" value="bL21-like_sf"/>
</dbReference>
<dbReference type="InterPro" id="IPR001787">
    <property type="entry name" value="Ribosomal_bL21"/>
</dbReference>
<dbReference type="InterPro" id="IPR018258">
    <property type="entry name" value="Ribosomal_bL21_CS"/>
</dbReference>
<dbReference type="NCBIfam" id="TIGR00061">
    <property type="entry name" value="L21"/>
    <property type="match status" value="1"/>
</dbReference>
<dbReference type="PANTHER" id="PTHR21349">
    <property type="entry name" value="50S RIBOSOMAL PROTEIN L21"/>
    <property type="match status" value="1"/>
</dbReference>
<dbReference type="PANTHER" id="PTHR21349:SF0">
    <property type="entry name" value="LARGE RIBOSOMAL SUBUNIT PROTEIN BL21M"/>
    <property type="match status" value="1"/>
</dbReference>
<dbReference type="Pfam" id="PF00829">
    <property type="entry name" value="Ribosomal_L21p"/>
    <property type="match status" value="1"/>
</dbReference>
<dbReference type="SUPFAM" id="SSF141091">
    <property type="entry name" value="L21p-like"/>
    <property type="match status" value="1"/>
</dbReference>
<dbReference type="PROSITE" id="PS01169">
    <property type="entry name" value="RIBOSOMAL_L21"/>
    <property type="match status" value="1"/>
</dbReference>
<feature type="chain" id="PRO_1000214905" description="Large ribosomal subunit protein bL21">
    <location>
        <begin position="1"/>
        <end position="103"/>
    </location>
</feature>
<organism>
    <name type="scientific">Variovorax paradoxus (strain S110)</name>
    <dbReference type="NCBI Taxonomy" id="543728"/>
    <lineage>
        <taxon>Bacteria</taxon>
        <taxon>Pseudomonadati</taxon>
        <taxon>Pseudomonadota</taxon>
        <taxon>Betaproteobacteria</taxon>
        <taxon>Burkholderiales</taxon>
        <taxon>Comamonadaceae</taxon>
        <taxon>Variovorax</taxon>
    </lineage>
</organism>
<reference key="1">
    <citation type="journal article" date="2011" name="J. Bacteriol.">
        <title>Complete genome sequence of the metabolically versatile plant growth-promoting endophyte, Variovorax paradoxus S110.</title>
        <authorList>
            <person name="Han J.I."/>
            <person name="Choi H.K."/>
            <person name="Lee S.W."/>
            <person name="Orwin P.M."/>
            <person name="Kim J."/>
            <person name="Laroe S.L."/>
            <person name="Kim T.G."/>
            <person name="O'Neil J."/>
            <person name="Leadbetter J.R."/>
            <person name="Lee S.Y."/>
            <person name="Hur C.G."/>
            <person name="Spain J.C."/>
            <person name="Ovchinnikova G."/>
            <person name="Goodwin L."/>
            <person name="Han C."/>
        </authorList>
    </citation>
    <scope>NUCLEOTIDE SEQUENCE [LARGE SCALE GENOMIC DNA]</scope>
    <source>
        <strain>S110</strain>
    </source>
</reference>
<sequence>MYAVIKTGGKQYRVASGEKIKVEQIAADVGQEIVIDQVLAVGNGSEIKIGTPLVSGATVTVTVLSHGKHDKVGIFKMRRRKHYQKRQGHRQQFTELQIGAIAG</sequence>
<comment type="function">
    <text evidence="1">This protein binds to 23S rRNA in the presence of protein L20.</text>
</comment>
<comment type="subunit">
    <text evidence="1">Part of the 50S ribosomal subunit. Contacts protein L20.</text>
</comment>
<comment type="similarity">
    <text evidence="1">Belongs to the bacterial ribosomal protein bL21 family.</text>
</comment>